<dbReference type="EC" id="6.3.2.4" evidence="2"/>
<dbReference type="EMBL" id="AE000783">
    <property type="protein sequence ID" value="AAC66589.2"/>
    <property type="molecule type" value="Genomic_DNA"/>
</dbReference>
<dbReference type="PIR" id="H70124">
    <property type="entry name" value="H70124"/>
</dbReference>
<dbReference type="RefSeq" id="NP_212334.2">
    <property type="nucleotide sequence ID" value="NC_001318.1"/>
</dbReference>
<dbReference type="RefSeq" id="WP_010889702.1">
    <property type="nucleotide sequence ID" value="NC_001318.1"/>
</dbReference>
<dbReference type="SMR" id="O51218"/>
<dbReference type="STRING" id="224326.BB_0200"/>
<dbReference type="PaxDb" id="224326-BB_0200"/>
<dbReference type="EnsemblBacteria" id="AAC66589">
    <property type="protein sequence ID" value="AAC66589"/>
    <property type="gene ID" value="BB_0200"/>
</dbReference>
<dbReference type="KEGG" id="bbu:BB_0200"/>
<dbReference type="PATRIC" id="fig|224326.49.peg.596"/>
<dbReference type="HOGENOM" id="CLU_039268_0_0_12"/>
<dbReference type="OrthoDB" id="9813261at2"/>
<dbReference type="UniPathway" id="UPA00219"/>
<dbReference type="Proteomes" id="UP000001807">
    <property type="component" value="Chromosome"/>
</dbReference>
<dbReference type="GO" id="GO:0005829">
    <property type="term" value="C:cytosol"/>
    <property type="evidence" value="ECO:0007669"/>
    <property type="project" value="TreeGrafter"/>
</dbReference>
<dbReference type="GO" id="GO:0005524">
    <property type="term" value="F:ATP binding"/>
    <property type="evidence" value="ECO:0007669"/>
    <property type="project" value="UniProtKB-KW"/>
</dbReference>
<dbReference type="GO" id="GO:0008716">
    <property type="term" value="F:D-alanine-D-alanine ligase activity"/>
    <property type="evidence" value="ECO:0007669"/>
    <property type="project" value="UniProtKB-UniRule"/>
</dbReference>
<dbReference type="GO" id="GO:0046872">
    <property type="term" value="F:metal ion binding"/>
    <property type="evidence" value="ECO:0007669"/>
    <property type="project" value="UniProtKB-KW"/>
</dbReference>
<dbReference type="GO" id="GO:0071555">
    <property type="term" value="P:cell wall organization"/>
    <property type="evidence" value="ECO:0007669"/>
    <property type="project" value="UniProtKB-KW"/>
</dbReference>
<dbReference type="GO" id="GO:0009252">
    <property type="term" value="P:peptidoglycan biosynthetic process"/>
    <property type="evidence" value="ECO:0007669"/>
    <property type="project" value="UniProtKB-UniRule"/>
</dbReference>
<dbReference type="GO" id="GO:0008360">
    <property type="term" value="P:regulation of cell shape"/>
    <property type="evidence" value="ECO:0007669"/>
    <property type="project" value="UniProtKB-KW"/>
</dbReference>
<dbReference type="Gene3D" id="3.40.50.20">
    <property type="match status" value="1"/>
</dbReference>
<dbReference type="Gene3D" id="3.30.1490.20">
    <property type="entry name" value="ATP-grasp fold, A domain"/>
    <property type="match status" value="1"/>
</dbReference>
<dbReference type="Gene3D" id="3.30.470.20">
    <property type="entry name" value="ATP-grasp fold, B domain"/>
    <property type="match status" value="1"/>
</dbReference>
<dbReference type="HAMAP" id="MF_00047">
    <property type="entry name" value="Dala_Dala_lig"/>
    <property type="match status" value="1"/>
</dbReference>
<dbReference type="InterPro" id="IPR011761">
    <property type="entry name" value="ATP-grasp"/>
</dbReference>
<dbReference type="InterPro" id="IPR013815">
    <property type="entry name" value="ATP_grasp_subdomain_1"/>
</dbReference>
<dbReference type="InterPro" id="IPR000291">
    <property type="entry name" value="D-Ala_lig_Van_CS"/>
</dbReference>
<dbReference type="InterPro" id="IPR005905">
    <property type="entry name" value="D_ala_D_ala"/>
</dbReference>
<dbReference type="InterPro" id="IPR011095">
    <property type="entry name" value="Dala_Dala_lig_C"/>
</dbReference>
<dbReference type="InterPro" id="IPR011127">
    <property type="entry name" value="Dala_Dala_lig_N"/>
</dbReference>
<dbReference type="InterPro" id="IPR016185">
    <property type="entry name" value="PreATP-grasp_dom_sf"/>
</dbReference>
<dbReference type="NCBIfam" id="TIGR01205">
    <property type="entry name" value="D_ala_D_alaTIGR"/>
    <property type="match status" value="1"/>
</dbReference>
<dbReference type="NCBIfam" id="NF002528">
    <property type="entry name" value="PRK01966.1-4"/>
    <property type="match status" value="1"/>
</dbReference>
<dbReference type="NCBIfam" id="NF011168">
    <property type="entry name" value="PRK14570.1"/>
    <property type="match status" value="1"/>
</dbReference>
<dbReference type="PANTHER" id="PTHR23132">
    <property type="entry name" value="D-ALANINE--D-ALANINE LIGASE"/>
    <property type="match status" value="1"/>
</dbReference>
<dbReference type="PANTHER" id="PTHR23132:SF25">
    <property type="entry name" value="D-ALANINE--D-ALANINE LIGASE A"/>
    <property type="match status" value="1"/>
</dbReference>
<dbReference type="Pfam" id="PF07478">
    <property type="entry name" value="Dala_Dala_lig_C"/>
    <property type="match status" value="1"/>
</dbReference>
<dbReference type="Pfam" id="PF01820">
    <property type="entry name" value="Dala_Dala_lig_N"/>
    <property type="match status" value="1"/>
</dbReference>
<dbReference type="PIRSF" id="PIRSF039102">
    <property type="entry name" value="Ddl/VanB"/>
    <property type="match status" value="1"/>
</dbReference>
<dbReference type="SUPFAM" id="SSF56059">
    <property type="entry name" value="Glutathione synthetase ATP-binding domain-like"/>
    <property type="match status" value="1"/>
</dbReference>
<dbReference type="SUPFAM" id="SSF52440">
    <property type="entry name" value="PreATP-grasp domain"/>
    <property type="match status" value="1"/>
</dbReference>
<dbReference type="PROSITE" id="PS50975">
    <property type="entry name" value="ATP_GRASP"/>
    <property type="match status" value="1"/>
</dbReference>
<dbReference type="PROSITE" id="PS00843">
    <property type="entry name" value="DALA_DALA_LIGASE_1"/>
    <property type="match status" value="1"/>
</dbReference>
<dbReference type="PROSITE" id="PS00844">
    <property type="entry name" value="DALA_DALA_LIGASE_2"/>
    <property type="match status" value="1"/>
</dbReference>
<protein>
    <recommendedName>
        <fullName evidence="2">D-alanine--D-alanine ligase</fullName>
        <ecNumber evidence="2">6.3.2.4</ecNumber>
    </recommendedName>
    <alternativeName>
        <fullName evidence="2">D-Ala-D-Ala ligase</fullName>
    </alternativeName>
    <alternativeName>
        <fullName evidence="2">D-alanylalanine synthetase</fullName>
    </alternativeName>
</protein>
<organism>
    <name type="scientific">Borreliella burgdorferi (strain ATCC 35210 / DSM 4680 / CIP 102532 / B31)</name>
    <name type="common">Borrelia burgdorferi</name>
    <dbReference type="NCBI Taxonomy" id="224326"/>
    <lineage>
        <taxon>Bacteria</taxon>
        <taxon>Pseudomonadati</taxon>
        <taxon>Spirochaetota</taxon>
        <taxon>Spirochaetia</taxon>
        <taxon>Spirochaetales</taxon>
        <taxon>Borreliaceae</taxon>
        <taxon>Borreliella</taxon>
    </lineage>
</organism>
<evidence type="ECO:0000250" key="1"/>
<evidence type="ECO:0000255" key="2">
    <source>
        <dbReference type="HAMAP-Rule" id="MF_00047"/>
    </source>
</evidence>
<feature type="chain" id="PRO_0000177789" description="D-alanine--D-alanine ligase">
    <location>
        <begin position="1"/>
        <end position="361"/>
    </location>
</feature>
<feature type="domain" description="ATP-grasp" evidence="2">
    <location>
        <begin position="134"/>
        <end position="344"/>
    </location>
</feature>
<feature type="binding site" evidence="2">
    <location>
        <begin position="167"/>
        <end position="222"/>
    </location>
    <ligand>
        <name>ATP</name>
        <dbReference type="ChEBI" id="CHEBI:30616"/>
    </ligand>
</feature>
<feature type="binding site" evidence="2">
    <location>
        <position position="297"/>
    </location>
    <ligand>
        <name>Mg(2+)</name>
        <dbReference type="ChEBI" id="CHEBI:18420"/>
        <label>1</label>
    </ligand>
</feature>
<feature type="binding site" evidence="2">
    <location>
        <position position="311"/>
    </location>
    <ligand>
        <name>Mg(2+)</name>
        <dbReference type="ChEBI" id="CHEBI:18420"/>
        <label>1</label>
    </ligand>
</feature>
<feature type="binding site" evidence="2">
    <location>
        <position position="311"/>
    </location>
    <ligand>
        <name>Mg(2+)</name>
        <dbReference type="ChEBI" id="CHEBI:18420"/>
        <label>2</label>
    </ligand>
</feature>
<feature type="binding site" evidence="2">
    <location>
        <position position="313"/>
    </location>
    <ligand>
        <name>Mg(2+)</name>
        <dbReference type="ChEBI" id="CHEBI:18420"/>
        <label>2</label>
    </ligand>
</feature>
<reference key="1">
    <citation type="journal article" date="1997" name="Nature">
        <title>Genomic sequence of a Lyme disease spirochaete, Borrelia burgdorferi.</title>
        <authorList>
            <person name="Fraser C.M."/>
            <person name="Casjens S."/>
            <person name="Huang W.M."/>
            <person name="Sutton G.G."/>
            <person name="Clayton R.A."/>
            <person name="Lathigra R."/>
            <person name="White O."/>
            <person name="Ketchum K.A."/>
            <person name="Dodson R.J."/>
            <person name="Hickey E.K."/>
            <person name="Gwinn M.L."/>
            <person name="Dougherty B.A."/>
            <person name="Tomb J.-F."/>
            <person name="Fleischmann R.D."/>
            <person name="Richardson D.L."/>
            <person name="Peterson J.D."/>
            <person name="Kerlavage A.R."/>
            <person name="Quackenbush J."/>
            <person name="Salzberg S.L."/>
            <person name="Hanson M."/>
            <person name="van Vugt R."/>
            <person name="Palmer N."/>
            <person name="Adams M.D."/>
            <person name="Gocayne J.D."/>
            <person name="Weidman J.F."/>
            <person name="Utterback T.R."/>
            <person name="Watthey L."/>
            <person name="McDonald L.A."/>
            <person name="Artiach P."/>
            <person name="Bowman C."/>
            <person name="Garland S.A."/>
            <person name="Fujii C."/>
            <person name="Cotton M.D."/>
            <person name="Horst K."/>
            <person name="Roberts K.M."/>
            <person name="Hatch B."/>
            <person name="Smith H.O."/>
            <person name="Venter J.C."/>
        </authorList>
    </citation>
    <scope>NUCLEOTIDE SEQUENCE [LARGE SCALE GENOMIC DNA]</scope>
    <source>
        <strain>ATCC 35210 / DSM 4680 / CIP 102532 / B31</strain>
    </source>
</reference>
<proteinExistence type="inferred from homology"/>
<gene>
    <name evidence="2" type="primary">ddl</name>
    <name type="synonym">ddlA</name>
    <name type="ordered locus">BB_0200</name>
</gene>
<comment type="function">
    <text evidence="2">Cell wall formation.</text>
</comment>
<comment type="catalytic activity">
    <reaction evidence="2">
        <text>2 D-alanine + ATP = D-alanyl-D-alanine + ADP + phosphate + H(+)</text>
        <dbReference type="Rhea" id="RHEA:11224"/>
        <dbReference type="ChEBI" id="CHEBI:15378"/>
        <dbReference type="ChEBI" id="CHEBI:30616"/>
        <dbReference type="ChEBI" id="CHEBI:43474"/>
        <dbReference type="ChEBI" id="CHEBI:57416"/>
        <dbReference type="ChEBI" id="CHEBI:57822"/>
        <dbReference type="ChEBI" id="CHEBI:456216"/>
        <dbReference type="EC" id="6.3.2.4"/>
    </reaction>
</comment>
<comment type="cofactor">
    <cofactor evidence="1">
        <name>Mg(2+)</name>
        <dbReference type="ChEBI" id="CHEBI:18420"/>
    </cofactor>
    <cofactor evidence="1">
        <name>Mn(2+)</name>
        <dbReference type="ChEBI" id="CHEBI:29035"/>
    </cofactor>
    <text evidence="1">Binds 2 magnesium or manganese ions per subunit.</text>
</comment>
<comment type="pathway">
    <text evidence="2">Cell wall biogenesis; peptidoglycan biosynthesis.</text>
</comment>
<comment type="subcellular location">
    <subcellularLocation>
        <location evidence="2">Cytoplasm</location>
    </subcellularLocation>
</comment>
<comment type="similarity">
    <text evidence="2">Belongs to the D-alanine--D-alanine ligase family.</text>
</comment>
<name>DDL_BORBU</name>
<accession>O51218</accession>
<sequence>MKKNLMLIFGGVSFEHEISCKSAYSIYLALLDLNKYNIYPVYIDKCTGVWYLLDSVSDPPKPINTDVLPIVSLLPGFGIFSNNKNLEIDVVFPVVHGRTGEDGAIQGVLKVMDIPCVGAGIIGSAISSNKYFCKLLLKSFDIPLVPFIGFRQHDYFLDKEEIKRNVKEVLGYPVIVKPAVLGSSIGINVAYSENQIESFIKEALKYDLTIVIEKFIEAREIECSIIGNEKMKIFSPGEVVVQDFIFYDYDAKYSVIPGNSIIFNIPAHLETNQLLSIKEYAFLTYKNLELRGMARVDFFVEKKSGTIYLNEINTIPGFTDISMFAKMCSNDGLQFKDLVDNLIDYAFQSYINRKKRIDFEN</sequence>
<keyword id="KW-0067">ATP-binding</keyword>
<keyword id="KW-0133">Cell shape</keyword>
<keyword id="KW-0961">Cell wall biogenesis/degradation</keyword>
<keyword id="KW-0963">Cytoplasm</keyword>
<keyword id="KW-0436">Ligase</keyword>
<keyword id="KW-0460">Magnesium</keyword>
<keyword id="KW-0464">Manganese</keyword>
<keyword id="KW-0479">Metal-binding</keyword>
<keyword id="KW-0547">Nucleotide-binding</keyword>
<keyword id="KW-0573">Peptidoglycan synthesis</keyword>
<keyword id="KW-1185">Reference proteome</keyword>